<sequence length="454" mass="49159">MSTTDTIVAQATPPGRGGVGILRISGRGAKDVAQALLGKLPKPRYADYLPFRDAAGATLDQGIALWFPGPNSFTGEDVLELQGHGGPVILDLLLKRVLALPGMRIARPGEFSERAFLNDKLDLAQAEAIADLIDASSEQAARSAMNSLQGAFSTRIHQLVEALTHLRIYVEAAIDFPDEEIDFLSDGKIEAQLNGVMADLDSVRAEARQGSLLREGMKVVIAGRPNAGKSSLLNALAGREAAIVTDIAGTTRDVLREHIHIDGMPLHIIDTAGLREASDEVERIGIERAWNEIEQADRVLFMVDGTTTAATEPAEIWPEFMARLPHRLPITVVRNKADITGETLGMTEVNGHSLIRLSARTGEGIDLLRDHLKQSMGFTSNMEGGFLARRRHLQALEQAAQHLVEGKEQLVSAYAGELLAEELRLAQQALSEITGEFTSDDLLGRIFSSFCIGK</sequence>
<feature type="chain" id="PRO_1000060052" description="tRNA modification GTPase MnmE">
    <location>
        <begin position="1"/>
        <end position="454"/>
    </location>
</feature>
<feature type="domain" description="TrmE-type G">
    <location>
        <begin position="216"/>
        <end position="377"/>
    </location>
</feature>
<feature type="binding site" evidence="1">
    <location>
        <position position="23"/>
    </location>
    <ligand>
        <name>(6S)-5-formyl-5,6,7,8-tetrahydrofolate</name>
        <dbReference type="ChEBI" id="CHEBI:57457"/>
    </ligand>
</feature>
<feature type="binding site" evidence="1">
    <location>
        <position position="80"/>
    </location>
    <ligand>
        <name>(6S)-5-formyl-5,6,7,8-tetrahydrofolate</name>
        <dbReference type="ChEBI" id="CHEBI:57457"/>
    </ligand>
</feature>
<feature type="binding site" evidence="1">
    <location>
        <position position="120"/>
    </location>
    <ligand>
        <name>(6S)-5-formyl-5,6,7,8-tetrahydrofolate</name>
        <dbReference type="ChEBI" id="CHEBI:57457"/>
    </ligand>
</feature>
<feature type="binding site" evidence="1">
    <location>
        <begin position="226"/>
        <end position="231"/>
    </location>
    <ligand>
        <name>GTP</name>
        <dbReference type="ChEBI" id="CHEBI:37565"/>
    </ligand>
</feature>
<feature type="binding site" evidence="1">
    <location>
        <position position="226"/>
    </location>
    <ligand>
        <name>K(+)</name>
        <dbReference type="ChEBI" id="CHEBI:29103"/>
    </ligand>
</feature>
<feature type="binding site" evidence="1">
    <location>
        <position position="230"/>
    </location>
    <ligand>
        <name>Mg(2+)</name>
        <dbReference type="ChEBI" id="CHEBI:18420"/>
    </ligand>
</feature>
<feature type="binding site" evidence="1">
    <location>
        <begin position="245"/>
        <end position="251"/>
    </location>
    <ligand>
        <name>GTP</name>
        <dbReference type="ChEBI" id="CHEBI:37565"/>
    </ligand>
</feature>
<feature type="binding site" evidence="1">
    <location>
        <position position="245"/>
    </location>
    <ligand>
        <name>K(+)</name>
        <dbReference type="ChEBI" id="CHEBI:29103"/>
    </ligand>
</feature>
<feature type="binding site" evidence="1">
    <location>
        <position position="247"/>
    </location>
    <ligand>
        <name>K(+)</name>
        <dbReference type="ChEBI" id="CHEBI:29103"/>
    </ligand>
</feature>
<feature type="binding site" evidence="1">
    <location>
        <position position="250"/>
    </location>
    <ligand>
        <name>K(+)</name>
        <dbReference type="ChEBI" id="CHEBI:29103"/>
    </ligand>
</feature>
<feature type="binding site" evidence="1">
    <location>
        <position position="251"/>
    </location>
    <ligand>
        <name>Mg(2+)</name>
        <dbReference type="ChEBI" id="CHEBI:18420"/>
    </ligand>
</feature>
<feature type="binding site" evidence="1">
    <location>
        <begin position="270"/>
        <end position="273"/>
    </location>
    <ligand>
        <name>GTP</name>
        <dbReference type="ChEBI" id="CHEBI:37565"/>
    </ligand>
</feature>
<feature type="binding site" evidence="1">
    <location>
        <begin position="335"/>
        <end position="338"/>
    </location>
    <ligand>
        <name>GTP</name>
        <dbReference type="ChEBI" id="CHEBI:37565"/>
    </ligand>
</feature>
<feature type="binding site" evidence="1">
    <location>
        <begin position="358"/>
        <end position="360"/>
    </location>
    <ligand>
        <name>GTP</name>
        <dbReference type="ChEBI" id="CHEBI:37565"/>
    </ligand>
</feature>
<feature type="binding site" evidence="1">
    <location>
        <position position="454"/>
    </location>
    <ligand>
        <name>(6S)-5-formyl-5,6,7,8-tetrahydrofolate</name>
        <dbReference type="ChEBI" id="CHEBI:57457"/>
    </ligand>
</feature>
<evidence type="ECO:0000255" key="1">
    <source>
        <dbReference type="HAMAP-Rule" id="MF_00379"/>
    </source>
</evidence>
<keyword id="KW-0963">Cytoplasm</keyword>
<keyword id="KW-0342">GTP-binding</keyword>
<keyword id="KW-0378">Hydrolase</keyword>
<keyword id="KW-0460">Magnesium</keyword>
<keyword id="KW-0479">Metal-binding</keyword>
<keyword id="KW-0547">Nucleotide-binding</keyword>
<keyword id="KW-0630">Potassium</keyword>
<keyword id="KW-0819">tRNA processing</keyword>
<proteinExistence type="inferred from homology"/>
<protein>
    <recommendedName>
        <fullName evidence="1">tRNA modification GTPase MnmE</fullName>
        <ecNumber evidence="1">3.6.-.-</ecNumber>
    </recommendedName>
</protein>
<comment type="function">
    <text evidence="1">Exhibits a very high intrinsic GTPase hydrolysis rate. Involved in the addition of a carboxymethylaminomethyl (cmnm) group at the wobble position (U34) of certain tRNAs, forming tRNA-cmnm(5)s(2)U34.</text>
</comment>
<comment type="cofactor">
    <cofactor evidence="1">
        <name>K(+)</name>
        <dbReference type="ChEBI" id="CHEBI:29103"/>
    </cofactor>
    <text evidence="1">Binds 1 potassium ion per subunit.</text>
</comment>
<comment type="subunit">
    <text evidence="1">Homodimer. Heterotetramer of two MnmE and two MnmG subunits.</text>
</comment>
<comment type="subcellular location">
    <subcellularLocation>
        <location evidence="1">Cytoplasm</location>
    </subcellularLocation>
</comment>
<comment type="similarity">
    <text evidence="1">Belongs to the TRAFAC class TrmE-Era-EngA-EngB-Septin-like GTPase superfamily. TrmE GTPase family.</text>
</comment>
<organism>
    <name type="scientific">Serratia proteamaculans (strain 568)</name>
    <dbReference type="NCBI Taxonomy" id="399741"/>
    <lineage>
        <taxon>Bacteria</taxon>
        <taxon>Pseudomonadati</taxon>
        <taxon>Pseudomonadota</taxon>
        <taxon>Gammaproteobacteria</taxon>
        <taxon>Enterobacterales</taxon>
        <taxon>Yersiniaceae</taxon>
        <taxon>Serratia</taxon>
    </lineage>
</organism>
<accession>A8G7P7</accession>
<name>MNME_SERP5</name>
<dbReference type="EC" id="3.6.-.-" evidence="1"/>
<dbReference type="EMBL" id="CP000826">
    <property type="protein sequence ID" value="ABV39137.1"/>
    <property type="molecule type" value="Genomic_DNA"/>
</dbReference>
<dbReference type="SMR" id="A8G7P7"/>
<dbReference type="STRING" id="399741.Spro_0027"/>
<dbReference type="KEGG" id="spe:Spro_0027"/>
<dbReference type="eggNOG" id="COG0486">
    <property type="taxonomic scope" value="Bacteria"/>
</dbReference>
<dbReference type="HOGENOM" id="CLU_019624_4_1_6"/>
<dbReference type="OrthoDB" id="9805918at2"/>
<dbReference type="GO" id="GO:0005829">
    <property type="term" value="C:cytosol"/>
    <property type="evidence" value="ECO:0007669"/>
    <property type="project" value="TreeGrafter"/>
</dbReference>
<dbReference type="GO" id="GO:0005525">
    <property type="term" value="F:GTP binding"/>
    <property type="evidence" value="ECO:0007669"/>
    <property type="project" value="UniProtKB-UniRule"/>
</dbReference>
<dbReference type="GO" id="GO:0003924">
    <property type="term" value="F:GTPase activity"/>
    <property type="evidence" value="ECO:0007669"/>
    <property type="project" value="UniProtKB-UniRule"/>
</dbReference>
<dbReference type="GO" id="GO:0046872">
    <property type="term" value="F:metal ion binding"/>
    <property type="evidence" value="ECO:0007669"/>
    <property type="project" value="UniProtKB-KW"/>
</dbReference>
<dbReference type="GO" id="GO:0030488">
    <property type="term" value="P:tRNA methylation"/>
    <property type="evidence" value="ECO:0007669"/>
    <property type="project" value="TreeGrafter"/>
</dbReference>
<dbReference type="GO" id="GO:0002098">
    <property type="term" value="P:tRNA wobble uridine modification"/>
    <property type="evidence" value="ECO:0007669"/>
    <property type="project" value="TreeGrafter"/>
</dbReference>
<dbReference type="CDD" id="cd04164">
    <property type="entry name" value="trmE"/>
    <property type="match status" value="1"/>
</dbReference>
<dbReference type="CDD" id="cd14858">
    <property type="entry name" value="TrmE_N"/>
    <property type="match status" value="1"/>
</dbReference>
<dbReference type="FunFam" id="3.30.1360.120:FF:000001">
    <property type="entry name" value="tRNA modification GTPase MnmE"/>
    <property type="match status" value="1"/>
</dbReference>
<dbReference type="FunFam" id="3.40.50.300:FF:000249">
    <property type="entry name" value="tRNA modification GTPase MnmE"/>
    <property type="match status" value="1"/>
</dbReference>
<dbReference type="Gene3D" id="3.40.50.300">
    <property type="entry name" value="P-loop containing nucleotide triphosphate hydrolases"/>
    <property type="match status" value="1"/>
</dbReference>
<dbReference type="Gene3D" id="3.30.1360.120">
    <property type="entry name" value="Probable tRNA modification gtpase trme, domain 1"/>
    <property type="match status" value="1"/>
</dbReference>
<dbReference type="Gene3D" id="1.20.120.430">
    <property type="entry name" value="tRNA modification GTPase MnmE domain 2"/>
    <property type="match status" value="1"/>
</dbReference>
<dbReference type="HAMAP" id="MF_00379">
    <property type="entry name" value="GTPase_MnmE"/>
    <property type="match status" value="1"/>
</dbReference>
<dbReference type="InterPro" id="IPR031168">
    <property type="entry name" value="G_TrmE"/>
</dbReference>
<dbReference type="InterPro" id="IPR006073">
    <property type="entry name" value="GTP-bd"/>
</dbReference>
<dbReference type="InterPro" id="IPR018948">
    <property type="entry name" value="GTP-bd_TrmE_N"/>
</dbReference>
<dbReference type="InterPro" id="IPR004520">
    <property type="entry name" value="GTPase_MnmE"/>
</dbReference>
<dbReference type="InterPro" id="IPR027368">
    <property type="entry name" value="MnmE_dom2"/>
</dbReference>
<dbReference type="InterPro" id="IPR025867">
    <property type="entry name" value="MnmE_helical"/>
</dbReference>
<dbReference type="InterPro" id="IPR027417">
    <property type="entry name" value="P-loop_NTPase"/>
</dbReference>
<dbReference type="InterPro" id="IPR005225">
    <property type="entry name" value="Small_GTP-bd"/>
</dbReference>
<dbReference type="InterPro" id="IPR027266">
    <property type="entry name" value="TrmE/GcvT_dom1"/>
</dbReference>
<dbReference type="NCBIfam" id="TIGR00450">
    <property type="entry name" value="mnmE_trmE_thdF"/>
    <property type="match status" value="1"/>
</dbReference>
<dbReference type="NCBIfam" id="NF003661">
    <property type="entry name" value="PRK05291.1-3"/>
    <property type="match status" value="1"/>
</dbReference>
<dbReference type="NCBIfam" id="TIGR00231">
    <property type="entry name" value="small_GTP"/>
    <property type="match status" value="1"/>
</dbReference>
<dbReference type="PANTHER" id="PTHR42714">
    <property type="entry name" value="TRNA MODIFICATION GTPASE GTPBP3"/>
    <property type="match status" value="1"/>
</dbReference>
<dbReference type="PANTHER" id="PTHR42714:SF2">
    <property type="entry name" value="TRNA MODIFICATION GTPASE GTPBP3, MITOCHONDRIAL"/>
    <property type="match status" value="1"/>
</dbReference>
<dbReference type="Pfam" id="PF01926">
    <property type="entry name" value="MMR_HSR1"/>
    <property type="match status" value="1"/>
</dbReference>
<dbReference type="Pfam" id="PF12631">
    <property type="entry name" value="MnmE_helical"/>
    <property type="match status" value="1"/>
</dbReference>
<dbReference type="Pfam" id="PF10396">
    <property type="entry name" value="TrmE_N"/>
    <property type="match status" value="1"/>
</dbReference>
<dbReference type="SUPFAM" id="SSF52540">
    <property type="entry name" value="P-loop containing nucleoside triphosphate hydrolases"/>
    <property type="match status" value="1"/>
</dbReference>
<dbReference type="SUPFAM" id="SSF116878">
    <property type="entry name" value="TrmE connector domain"/>
    <property type="match status" value="1"/>
</dbReference>
<dbReference type="PROSITE" id="PS51709">
    <property type="entry name" value="G_TRME"/>
    <property type="match status" value="1"/>
</dbReference>
<reference key="1">
    <citation type="submission" date="2007-09" db="EMBL/GenBank/DDBJ databases">
        <title>Complete sequence of chromosome of Serratia proteamaculans 568.</title>
        <authorList>
            <consortium name="US DOE Joint Genome Institute"/>
            <person name="Copeland A."/>
            <person name="Lucas S."/>
            <person name="Lapidus A."/>
            <person name="Barry K."/>
            <person name="Glavina del Rio T."/>
            <person name="Dalin E."/>
            <person name="Tice H."/>
            <person name="Pitluck S."/>
            <person name="Chain P."/>
            <person name="Malfatti S."/>
            <person name="Shin M."/>
            <person name="Vergez L."/>
            <person name="Schmutz J."/>
            <person name="Larimer F."/>
            <person name="Land M."/>
            <person name="Hauser L."/>
            <person name="Kyrpides N."/>
            <person name="Kim E."/>
            <person name="Taghavi S."/>
            <person name="Newman L."/>
            <person name="Vangronsveld J."/>
            <person name="van der Lelie D."/>
            <person name="Richardson P."/>
        </authorList>
    </citation>
    <scope>NUCLEOTIDE SEQUENCE [LARGE SCALE GENOMIC DNA]</scope>
    <source>
        <strain>568</strain>
    </source>
</reference>
<gene>
    <name evidence="1" type="primary">mnmE</name>
    <name evidence="1" type="synonym">trmE</name>
    <name type="ordered locus">Spro_0027</name>
</gene>